<dbReference type="EC" id="6.1.1.11" evidence="1"/>
<dbReference type="EMBL" id="CP000559">
    <property type="protein sequence ID" value="ABN06882.1"/>
    <property type="molecule type" value="Genomic_DNA"/>
</dbReference>
<dbReference type="RefSeq" id="WP_011833083.1">
    <property type="nucleotide sequence ID" value="NC_008942.1"/>
</dbReference>
<dbReference type="SMR" id="A2SRC6"/>
<dbReference type="STRING" id="410358.Mlab_0710"/>
<dbReference type="GeneID" id="4796002"/>
<dbReference type="KEGG" id="mla:Mlab_0710"/>
<dbReference type="eggNOG" id="arCOG00403">
    <property type="taxonomic scope" value="Archaea"/>
</dbReference>
<dbReference type="HOGENOM" id="CLU_023797_0_1_2"/>
<dbReference type="OrthoDB" id="35932at2157"/>
<dbReference type="UniPathway" id="UPA00906">
    <property type="reaction ID" value="UER00895"/>
</dbReference>
<dbReference type="Proteomes" id="UP000000365">
    <property type="component" value="Chromosome"/>
</dbReference>
<dbReference type="GO" id="GO:0005737">
    <property type="term" value="C:cytoplasm"/>
    <property type="evidence" value="ECO:0007669"/>
    <property type="project" value="UniProtKB-SubCell"/>
</dbReference>
<dbReference type="GO" id="GO:0005524">
    <property type="term" value="F:ATP binding"/>
    <property type="evidence" value="ECO:0007669"/>
    <property type="project" value="UniProtKB-UniRule"/>
</dbReference>
<dbReference type="GO" id="GO:0004828">
    <property type="term" value="F:serine-tRNA ligase activity"/>
    <property type="evidence" value="ECO:0007669"/>
    <property type="project" value="UniProtKB-UniRule"/>
</dbReference>
<dbReference type="GO" id="GO:0016260">
    <property type="term" value="P:selenocysteine biosynthetic process"/>
    <property type="evidence" value="ECO:0007669"/>
    <property type="project" value="UniProtKB-UniRule"/>
</dbReference>
<dbReference type="GO" id="GO:0006434">
    <property type="term" value="P:seryl-tRNA aminoacylation"/>
    <property type="evidence" value="ECO:0007669"/>
    <property type="project" value="UniProtKB-UniRule"/>
</dbReference>
<dbReference type="CDD" id="cd00770">
    <property type="entry name" value="SerRS_core"/>
    <property type="match status" value="1"/>
</dbReference>
<dbReference type="Gene3D" id="3.30.930.10">
    <property type="entry name" value="Bira Bifunctional Protein, Domain 2"/>
    <property type="match status" value="1"/>
</dbReference>
<dbReference type="Gene3D" id="1.10.287.40">
    <property type="entry name" value="Serine-tRNA synthetase, tRNA binding domain"/>
    <property type="match status" value="1"/>
</dbReference>
<dbReference type="HAMAP" id="MF_00176">
    <property type="entry name" value="Ser_tRNA_synth_type1"/>
    <property type="match status" value="1"/>
</dbReference>
<dbReference type="InterPro" id="IPR002314">
    <property type="entry name" value="aa-tRNA-synt_IIb"/>
</dbReference>
<dbReference type="InterPro" id="IPR006195">
    <property type="entry name" value="aa-tRNA-synth_II"/>
</dbReference>
<dbReference type="InterPro" id="IPR045864">
    <property type="entry name" value="aa-tRNA-synth_II/BPL/LPL"/>
</dbReference>
<dbReference type="InterPro" id="IPR002317">
    <property type="entry name" value="Ser-tRNA-ligase_type_1"/>
</dbReference>
<dbReference type="InterPro" id="IPR015866">
    <property type="entry name" value="Ser-tRNA-synth_1_N"/>
</dbReference>
<dbReference type="InterPro" id="IPR042103">
    <property type="entry name" value="SerRS_1_N_sf"/>
</dbReference>
<dbReference type="InterPro" id="IPR033729">
    <property type="entry name" value="SerRS_core"/>
</dbReference>
<dbReference type="InterPro" id="IPR010978">
    <property type="entry name" value="tRNA-bd_arm"/>
</dbReference>
<dbReference type="NCBIfam" id="TIGR00414">
    <property type="entry name" value="serS"/>
    <property type="match status" value="1"/>
</dbReference>
<dbReference type="PANTHER" id="PTHR11778">
    <property type="entry name" value="SERYL-TRNA SYNTHETASE"/>
    <property type="match status" value="1"/>
</dbReference>
<dbReference type="Pfam" id="PF02403">
    <property type="entry name" value="Seryl_tRNA_N"/>
    <property type="match status" value="1"/>
</dbReference>
<dbReference type="Pfam" id="PF00587">
    <property type="entry name" value="tRNA-synt_2b"/>
    <property type="match status" value="1"/>
</dbReference>
<dbReference type="PIRSF" id="PIRSF001529">
    <property type="entry name" value="Ser-tRNA-synth_IIa"/>
    <property type="match status" value="1"/>
</dbReference>
<dbReference type="PRINTS" id="PR00981">
    <property type="entry name" value="TRNASYNTHSER"/>
</dbReference>
<dbReference type="SUPFAM" id="SSF55681">
    <property type="entry name" value="Class II aaRS and biotin synthetases"/>
    <property type="match status" value="1"/>
</dbReference>
<dbReference type="SUPFAM" id="SSF46589">
    <property type="entry name" value="tRNA-binding arm"/>
    <property type="match status" value="1"/>
</dbReference>
<dbReference type="PROSITE" id="PS50862">
    <property type="entry name" value="AA_TRNA_LIGASE_II"/>
    <property type="match status" value="1"/>
</dbReference>
<name>SYS_METLZ</name>
<organism>
    <name type="scientific">Methanocorpusculum labreanum (strain ATCC 43576 / DSM 4855 / Z)</name>
    <dbReference type="NCBI Taxonomy" id="410358"/>
    <lineage>
        <taxon>Archaea</taxon>
        <taxon>Methanobacteriati</taxon>
        <taxon>Methanobacteriota</taxon>
        <taxon>Stenosarchaea group</taxon>
        <taxon>Methanomicrobia</taxon>
        <taxon>Methanomicrobiales</taxon>
        <taxon>Methanocorpusculaceae</taxon>
        <taxon>Methanocorpusculum</taxon>
    </lineage>
</organism>
<comment type="function">
    <text evidence="1">Catalyzes the attachment of serine to tRNA(Ser). Is also able to aminoacylate tRNA(Sec) with serine, to form the misacylated tRNA L-seryl-tRNA(Sec), which will be further converted into selenocysteinyl-tRNA(Sec).</text>
</comment>
<comment type="catalytic activity">
    <reaction evidence="1">
        <text>tRNA(Ser) + L-serine + ATP = L-seryl-tRNA(Ser) + AMP + diphosphate + H(+)</text>
        <dbReference type="Rhea" id="RHEA:12292"/>
        <dbReference type="Rhea" id="RHEA-COMP:9669"/>
        <dbReference type="Rhea" id="RHEA-COMP:9703"/>
        <dbReference type="ChEBI" id="CHEBI:15378"/>
        <dbReference type="ChEBI" id="CHEBI:30616"/>
        <dbReference type="ChEBI" id="CHEBI:33019"/>
        <dbReference type="ChEBI" id="CHEBI:33384"/>
        <dbReference type="ChEBI" id="CHEBI:78442"/>
        <dbReference type="ChEBI" id="CHEBI:78533"/>
        <dbReference type="ChEBI" id="CHEBI:456215"/>
        <dbReference type="EC" id="6.1.1.11"/>
    </reaction>
</comment>
<comment type="catalytic activity">
    <reaction evidence="1">
        <text>tRNA(Sec) + L-serine + ATP = L-seryl-tRNA(Sec) + AMP + diphosphate + H(+)</text>
        <dbReference type="Rhea" id="RHEA:42580"/>
        <dbReference type="Rhea" id="RHEA-COMP:9742"/>
        <dbReference type="Rhea" id="RHEA-COMP:10128"/>
        <dbReference type="ChEBI" id="CHEBI:15378"/>
        <dbReference type="ChEBI" id="CHEBI:30616"/>
        <dbReference type="ChEBI" id="CHEBI:33019"/>
        <dbReference type="ChEBI" id="CHEBI:33384"/>
        <dbReference type="ChEBI" id="CHEBI:78442"/>
        <dbReference type="ChEBI" id="CHEBI:78533"/>
        <dbReference type="ChEBI" id="CHEBI:456215"/>
        <dbReference type="EC" id="6.1.1.11"/>
    </reaction>
</comment>
<comment type="pathway">
    <text evidence="1">Aminoacyl-tRNA biosynthesis; selenocysteinyl-tRNA(Sec) biosynthesis; L-seryl-tRNA(Sec) from L-serine and tRNA(Sec): step 1/1.</text>
</comment>
<comment type="subunit">
    <text evidence="1">Homodimer. The tRNA molecule binds across the dimer.</text>
</comment>
<comment type="subcellular location">
    <subcellularLocation>
        <location evidence="1">Cytoplasm</location>
    </subcellularLocation>
</comment>
<comment type="domain">
    <text evidence="1">Consists of two distinct domains, a catalytic core and a N-terminal extension that is involved in tRNA binding.</text>
</comment>
<comment type="similarity">
    <text evidence="1">Belongs to the class-II aminoacyl-tRNA synthetase family. Type-1 seryl-tRNA synthetase subfamily.</text>
</comment>
<protein>
    <recommendedName>
        <fullName evidence="1">Serine--tRNA ligase</fullName>
        <ecNumber evidence="1">6.1.1.11</ecNumber>
    </recommendedName>
    <alternativeName>
        <fullName evidence="1">Seryl-tRNA synthetase</fullName>
        <shortName evidence="1">SerRS</shortName>
    </alternativeName>
    <alternativeName>
        <fullName evidence="1">Seryl-tRNA(Ser/Sec) synthetase</fullName>
    </alternativeName>
</protein>
<gene>
    <name evidence="1" type="primary">serS</name>
    <name type="ordered locus">Mlab_0710</name>
</gene>
<reference key="1">
    <citation type="journal article" date="2009" name="Stand. Genomic Sci.">
        <title>Complete genome sequence of Methanocorpusculum labreanum type strain Z.</title>
        <authorList>
            <person name="Anderson I.J."/>
            <person name="Sieprawska-Lupa M."/>
            <person name="Goltsman E."/>
            <person name="Lapidus A."/>
            <person name="Copeland A."/>
            <person name="Glavina Del Rio T."/>
            <person name="Tice H."/>
            <person name="Dalin E."/>
            <person name="Barry K."/>
            <person name="Pitluck S."/>
            <person name="Hauser L."/>
            <person name="Land M."/>
            <person name="Lucas S."/>
            <person name="Richardson P."/>
            <person name="Whitman W.B."/>
            <person name="Kyrpides N.C."/>
        </authorList>
    </citation>
    <scope>NUCLEOTIDE SEQUENCE [LARGE SCALE GENOMIC DNA]</scope>
    <source>
        <strain>ATCC 43576 / DSM 4855 / Z</strain>
    </source>
</reference>
<feature type="chain" id="PRO_1000019729" description="Serine--tRNA ligase">
    <location>
        <begin position="1"/>
        <end position="425"/>
    </location>
</feature>
<feature type="binding site" evidence="1">
    <location>
        <begin position="232"/>
        <end position="234"/>
    </location>
    <ligand>
        <name>L-serine</name>
        <dbReference type="ChEBI" id="CHEBI:33384"/>
    </ligand>
</feature>
<feature type="binding site" evidence="1">
    <location>
        <begin position="263"/>
        <end position="265"/>
    </location>
    <ligand>
        <name>ATP</name>
        <dbReference type="ChEBI" id="CHEBI:30616"/>
    </ligand>
</feature>
<feature type="binding site" evidence="1">
    <location>
        <position position="279"/>
    </location>
    <ligand>
        <name>ATP</name>
        <dbReference type="ChEBI" id="CHEBI:30616"/>
    </ligand>
</feature>
<feature type="binding site" evidence="1">
    <location>
        <position position="286"/>
    </location>
    <ligand>
        <name>L-serine</name>
        <dbReference type="ChEBI" id="CHEBI:33384"/>
    </ligand>
</feature>
<feature type="binding site" evidence="1">
    <location>
        <begin position="350"/>
        <end position="353"/>
    </location>
    <ligand>
        <name>ATP</name>
        <dbReference type="ChEBI" id="CHEBI:30616"/>
    </ligand>
</feature>
<feature type="binding site" evidence="1">
    <location>
        <position position="387"/>
    </location>
    <ligand>
        <name>L-serine</name>
        <dbReference type="ChEBI" id="CHEBI:33384"/>
    </ligand>
</feature>
<sequence length="425" mass="48917">MLDIKFVRAHPEVVLADLEKRQDAEKLLWVDTVLEQDKLFRELTVKNNELRARRNQIAKEINAYKKEGKDPAPLFAEAKALPGLIKDNDDIMEKATEQVRYYLMRLPNILHESVPYGKDDTENVVVKKVGTPRSLDFELKNHGELAAANGWADFERATKTSGAGFYFLKGNLALLDMALQRFALDTIIAKGYTPIIPPYMMNRKSYEEVTDLGDFEKVMYKIEDDDAYLIATAEHPMAAMYQDEIFEEKDLPLKMVGISPCFRREIGAHGLDSRGLFRVHQFTKIEQFIYCMPEKSWEMHEELLANAEEIFTKLGLPYRVVNICTGDIGTVAAKKYDMEAWMPRDNEYREVVSCSNCTAYQSVRLNIRVRDAHDFESKQWLHTLNSTAVATSRALRCILENYQTEDGKVEIPKVLRPYMNGLEYL</sequence>
<keyword id="KW-0030">Aminoacyl-tRNA synthetase</keyword>
<keyword id="KW-0067">ATP-binding</keyword>
<keyword id="KW-0963">Cytoplasm</keyword>
<keyword id="KW-0436">Ligase</keyword>
<keyword id="KW-0547">Nucleotide-binding</keyword>
<keyword id="KW-0648">Protein biosynthesis</keyword>
<keyword id="KW-1185">Reference proteome</keyword>
<accession>A2SRC6</accession>
<proteinExistence type="inferred from homology"/>
<evidence type="ECO:0000255" key="1">
    <source>
        <dbReference type="HAMAP-Rule" id="MF_00176"/>
    </source>
</evidence>